<evidence type="ECO:0000305" key="1"/>
<keyword id="KW-1185">Reference proteome</keyword>
<dbReference type="EMBL" id="AE003852">
    <property type="protein sequence ID" value="AAF95618.1"/>
    <property type="status" value="ALT_FRAME"/>
    <property type="molecule type" value="Genomic_DNA"/>
</dbReference>
<dbReference type="PIR" id="F82071">
    <property type="entry name" value="F82071"/>
</dbReference>
<dbReference type="SMR" id="Q9KP97"/>
<dbReference type="STRING" id="243277.VC_2476"/>
<dbReference type="DNASU" id="2613018"/>
<dbReference type="EnsemblBacteria" id="AAF95618">
    <property type="protein sequence ID" value="AAF95618"/>
    <property type="gene ID" value="VC_2476"/>
</dbReference>
<dbReference type="KEGG" id="vch:VC_2476"/>
<dbReference type="eggNOG" id="COG3079">
    <property type="taxonomic scope" value="Bacteria"/>
</dbReference>
<dbReference type="HOGENOM" id="CLU_085336_1_0_6"/>
<dbReference type="Proteomes" id="UP000000584">
    <property type="component" value="Chromosome 1"/>
</dbReference>
<dbReference type="GO" id="GO:0005829">
    <property type="term" value="C:cytosol"/>
    <property type="evidence" value="ECO:0000318"/>
    <property type="project" value="GO_Central"/>
</dbReference>
<dbReference type="Gene3D" id="1.20.120.740">
    <property type="entry name" value="YgfB uncharacterised protein family UPF0149, PF03695"/>
    <property type="match status" value="1"/>
</dbReference>
<dbReference type="HAMAP" id="MF_00346">
    <property type="entry name" value="UPF0149"/>
    <property type="match status" value="1"/>
</dbReference>
<dbReference type="InterPro" id="IPR011978">
    <property type="entry name" value="YgfB-like"/>
</dbReference>
<dbReference type="InterPro" id="IPR036255">
    <property type="entry name" value="YgfB-like_sf"/>
</dbReference>
<dbReference type="NCBIfam" id="NF002477">
    <property type="entry name" value="PRK01736.1"/>
    <property type="match status" value="1"/>
</dbReference>
<dbReference type="NCBIfam" id="TIGR02292">
    <property type="entry name" value="ygfB_yecA"/>
    <property type="match status" value="1"/>
</dbReference>
<dbReference type="PANTHER" id="PTHR37528">
    <property type="entry name" value="UPF0149 PROTEIN YGFB"/>
    <property type="match status" value="1"/>
</dbReference>
<dbReference type="PANTHER" id="PTHR37528:SF1">
    <property type="entry name" value="UPF0149 PROTEIN YGFB"/>
    <property type="match status" value="1"/>
</dbReference>
<dbReference type="Pfam" id="PF03695">
    <property type="entry name" value="UPF0149"/>
    <property type="match status" value="1"/>
</dbReference>
<dbReference type="SUPFAM" id="SSF101327">
    <property type="entry name" value="YgfB-like"/>
    <property type="match status" value="1"/>
</dbReference>
<comment type="similarity">
    <text evidence="1">Belongs to the UPF0149 family.</text>
</comment>
<comment type="sequence caution" evidence="1">
    <conflict type="frameshift">
        <sequence resource="EMBL-CDS" id="AAF95618"/>
    </conflict>
</comment>
<protein>
    <recommendedName>
        <fullName>UPF0149 protein VC_2476</fullName>
    </recommendedName>
</protein>
<sequence length="191" mass="20593">MSKNRLPAYPALANELRTASLGINPAELQGLLTGMLSGGLSLNDKSWQALVFDYTNDGMGWPIGALASAEQILLAMSAQLVDTDFELSLLLPEGEGEEALFELADAVAEWINHFISGLGLSGANLKHASVEAKEALEDLEEMSKLGIDEEDDLAEQAELLEQVIEHIKACVLVLHAEFGVKPEQDTKPTVH</sequence>
<organism>
    <name type="scientific">Vibrio cholerae serotype O1 (strain ATCC 39315 / El Tor Inaba N16961)</name>
    <dbReference type="NCBI Taxonomy" id="243277"/>
    <lineage>
        <taxon>Bacteria</taxon>
        <taxon>Pseudomonadati</taxon>
        <taxon>Pseudomonadota</taxon>
        <taxon>Gammaproteobacteria</taxon>
        <taxon>Vibrionales</taxon>
        <taxon>Vibrionaceae</taxon>
        <taxon>Vibrio</taxon>
    </lineage>
</organism>
<reference key="1">
    <citation type="journal article" date="2000" name="Nature">
        <title>DNA sequence of both chromosomes of the cholera pathogen Vibrio cholerae.</title>
        <authorList>
            <person name="Heidelberg J.F."/>
            <person name="Eisen J.A."/>
            <person name="Nelson W.C."/>
            <person name="Clayton R.A."/>
            <person name="Gwinn M.L."/>
            <person name="Dodson R.J."/>
            <person name="Haft D.H."/>
            <person name="Hickey E.K."/>
            <person name="Peterson J.D."/>
            <person name="Umayam L.A."/>
            <person name="Gill S.R."/>
            <person name="Nelson K.E."/>
            <person name="Read T.D."/>
            <person name="Tettelin H."/>
            <person name="Richardson D.L."/>
            <person name="Ermolaeva M.D."/>
            <person name="Vamathevan J.J."/>
            <person name="Bass S."/>
            <person name="Qin H."/>
            <person name="Dragoi I."/>
            <person name="Sellers P."/>
            <person name="McDonald L.A."/>
            <person name="Utterback T.R."/>
            <person name="Fleischmann R.D."/>
            <person name="Nierman W.C."/>
            <person name="White O."/>
            <person name="Salzberg S.L."/>
            <person name="Smith H.O."/>
            <person name="Colwell R.R."/>
            <person name="Mekalanos J.J."/>
            <person name="Venter J.C."/>
            <person name="Fraser C.M."/>
        </authorList>
    </citation>
    <scope>NUCLEOTIDE SEQUENCE [LARGE SCALE GENOMIC DNA]</scope>
    <source>
        <strain>ATCC 39315 / El Tor Inaba N16961</strain>
    </source>
</reference>
<proteinExistence type="inferred from homology"/>
<gene>
    <name type="ordered locus">VC_2476</name>
</gene>
<name>Y2476_VIBCH</name>
<accession>Q9KP97</accession>
<feature type="chain" id="PRO_0000207570" description="UPF0149 protein VC_2476">
    <location>
        <begin position="1"/>
        <end position="191"/>
    </location>
</feature>